<keyword id="KW-0028">Amino-acid biosynthesis</keyword>
<keyword id="KW-0057">Aromatic amino acid biosynthesis</keyword>
<keyword id="KW-0210">Decarboxylase</keyword>
<keyword id="KW-0456">Lyase</keyword>
<keyword id="KW-0822">Tryptophan biosynthesis</keyword>
<feature type="chain" id="PRO_1000095845" description="Indole-3-glycerol phosphate synthase">
    <location>
        <begin position="1"/>
        <end position="268"/>
    </location>
</feature>
<dbReference type="EC" id="4.1.1.48" evidence="1"/>
<dbReference type="EMBL" id="CU468230">
    <property type="protein sequence ID" value="CAP00512.1"/>
    <property type="molecule type" value="Genomic_DNA"/>
</dbReference>
<dbReference type="SMR" id="B0VUS0"/>
<dbReference type="KEGG" id="abm:ABSDF1162"/>
<dbReference type="HOGENOM" id="CLU_034247_2_0_6"/>
<dbReference type="UniPathway" id="UPA00035">
    <property type="reaction ID" value="UER00043"/>
</dbReference>
<dbReference type="Proteomes" id="UP000001741">
    <property type="component" value="Chromosome"/>
</dbReference>
<dbReference type="GO" id="GO:0004425">
    <property type="term" value="F:indole-3-glycerol-phosphate synthase activity"/>
    <property type="evidence" value="ECO:0007669"/>
    <property type="project" value="UniProtKB-UniRule"/>
</dbReference>
<dbReference type="GO" id="GO:0004640">
    <property type="term" value="F:phosphoribosylanthranilate isomerase activity"/>
    <property type="evidence" value="ECO:0007669"/>
    <property type="project" value="TreeGrafter"/>
</dbReference>
<dbReference type="GO" id="GO:0000162">
    <property type="term" value="P:L-tryptophan biosynthetic process"/>
    <property type="evidence" value="ECO:0007669"/>
    <property type="project" value="UniProtKB-UniRule"/>
</dbReference>
<dbReference type="CDD" id="cd00331">
    <property type="entry name" value="IGPS"/>
    <property type="match status" value="1"/>
</dbReference>
<dbReference type="FunFam" id="3.20.20.70:FF:000024">
    <property type="entry name" value="Indole-3-glycerol phosphate synthase"/>
    <property type="match status" value="1"/>
</dbReference>
<dbReference type="Gene3D" id="3.20.20.70">
    <property type="entry name" value="Aldolase class I"/>
    <property type="match status" value="1"/>
</dbReference>
<dbReference type="HAMAP" id="MF_00134_B">
    <property type="entry name" value="IGPS_B"/>
    <property type="match status" value="1"/>
</dbReference>
<dbReference type="InterPro" id="IPR013785">
    <property type="entry name" value="Aldolase_TIM"/>
</dbReference>
<dbReference type="InterPro" id="IPR045186">
    <property type="entry name" value="Indole-3-glycerol_P_synth"/>
</dbReference>
<dbReference type="InterPro" id="IPR013798">
    <property type="entry name" value="Indole-3-glycerol_P_synth_dom"/>
</dbReference>
<dbReference type="InterPro" id="IPR001468">
    <property type="entry name" value="Indole-3-GlycerolPSynthase_CS"/>
</dbReference>
<dbReference type="InterPro" id="IPR011060">
    <property type="entry name" value="RibuloseP-bd_barrel"/>
</dbReference>
<dbReference type="NCBIfam" id="NF001373">
    <property type="entry name" value="PRK00278.1-6"/>
    <property type="match status" value="1"/>
</dbReference>
<dbReference type="NCBIfam" id="NF001377">
    <property type="entry name" value="PRK00278.2-4"/>
    <property type="match status" value="1"/>
</dbReference>
<dbReference type="PANTHER" id="PTHR22854:SF2">
    <property type="entry name" value="INDOLE-3-GLYCEROL-PHOSPHATE SYNTHASE"/>
    <property type="match status" value="1"/>
</dbReference>
<dbReference type="PANTHER" id="PTHR22854">
    <property type="entry name" value="TRYPTOPHAN BIOSYNTHESIS PROTEIN"/>
    <property type="match status" value="1"/>
</dbReference>
<dbReference type="Pfam" id="PF00218">
    <property type="entry name" value="IGPS"/>
    <property type="match status" value="1"/>
</dbReference>
<dbReference type="SUPFAM" id="SSF51366">
    <property type="entry name" value="Ribulose-phoshate binding barrel"/>
    <property type="match status" value="1"/>
</dbReference>
<dbReference type="PROSITE" id="PS00614">
    <property type="entry name" value="IGPS"/>
    <property type="match status" value="1"/>
</dbReference>
<gene>
    <name evidence="1" type="primary">trpC</name>
    <name type="ordered locus">ABSDF1162</name>
</gene>
<organism>
    <name type="scientific">Acinetobacter baumannii (strain SDF)</name>
    <dbReference type="NCBI Taxonomy" id="509170"/>
    <lineage>
        <taxon>Bacteria</taxon>
        <taxon>Pseudomonadati</taxon>
        <taxon>Pseudomonadota</taxon>
        <taxon>Gammaproteobacteria</taxon>
        <taxon>Moraxellales</taxon>
        <taxon>Moraxellaceae</taxon>
        <taxon>Acinetobacter</taxon>
        <taxon>Acinetobacter calcoaceticus/baumannii complex</taxon>
    </lineage>
</organism>
<accession>B0VUS0</accession>
<proteinExistence type="inferred from homology"/>
<protein>
    <recommendedName>
        <fullName evidence="1">Indole-3-glycerol phosphate synthase</fullName>
        <shortName evidence="1">IGPS</shortName>
        <ecNumber evidence="1">4.1.1.48</ecNumber>
    </recommendedName>
</protein>
<reference key="1">
    <citation type="journal article" date="2008" name="PLoS ONE">
        <title>Comparative analysis of Acinetobacters: three genomes for three lifestyles.</title>
        <authorList>
            <person name="Vallenet D."/>
            <person name="Nordmann P."/>
            <person name="Barbe V."/>
            <person name="Poirel L."/>
            <person name="Mangenot S."/>
            <person name="Bataille E."/>
            <person name="Dossat C."/>
            <person name="Gas S."/>
            <person name="Kreimeyer A."/>
            <person name="Lenoble P."/>
            <person name="Oztas S."/>
            <person name="Poulain J."/>
            <person name="Segurens B."/>
            <person name="Robert C."/>
            <person name="Abergel C."/>
            <person name="Claverie J.-M."/>
            <person name="Raoult D."/>
            <person name="Medigue C."/>
            <person name="Weissenbach J."/>
            <person name="Cruveiller S."/>
        </authorList>
    </citation>
    <scope>NUCLEOTIDE SEQUENCE [LARGE SCALE GENOMIC DNA]</scope>
    <source>
        <strain>SDF</strain>
    </source>
</reference>
<name>TRPC_ACIBS</name>
<comment type="catalytic activity">
    <reaction evidence="1">
        <text>1-(2-carboxyphenylamino)-1-deoxy-D-ribulose 5-phosphate + H(+) = (1S,2R)-1-C-(indol-3-yl)glycerol 3-phosphate + CO2 + H2O</text>
        <dbReference type="Rhea" id="RHEA:23476"/>
        <dbReference type="ChEBI" id="CHEBI:15377"/>
        <dbReference type="ChEBI" id="CHEBI:15378"/>
        <dbReference type="ChEBI" id="CHEBI:16526"/>
        <dbReference type="ChEBI" id="CHEBI:58613"/>
        <dbReference type="ChEBI" id="CHEBI:58866"/>
        <dbReference type="EC" id="4.1.1.48"/>
    </reaction>
</comment>
<comment type="pathway">
    <text evidence="1">Amino-acid biosynthesis; L-tryptophan biosynthesis; L-tryptophan from chorismate: step 4/5.</text>
</comment>
<comment type="similarity">
    <text evidence="1">Belongs to the TrpC family.</text>
</comment>
<sequence>MINIQNTILGKIVDRKHEDLAARLKQRNLQDVEELAKAATPVRGFANALQHKRPGVIAEIKKASPSKGIIRADFNPAEIAQQYEQAGAACLSVLTDVDFFQGADENIAIARNHCTLPALRKDFLVDPYNVVEARALHADCILLIVACLSDQQLEEMSKTAFEHQLDVLVEVHDEEELERALKLSEQCLLGVNNRNLKTFDVDLNTTIRLKKLLPASRLLITESGIATPDDVRMMQEHDIHSFLVGESFMKQPRPDQAFTALFGQPQTV</sequence>
<evidence type="ECO:0000255" key="1">
    <source>
        <dbReference type="HAMAP-Rule" id="MF_00134"/>
    </source>
</evidence>